<feature type="chain" id="PRO_0000213991" description="Histone-lysine N-methyltransferase EZH1">
    <location>
        <begin position="1"/>
        <end position="747"/>
    </location>
</feature>
<feature type="domain" description="CXC" evidence="5">
    <location>
        <begin position="504"/>
        <end position="606"/>
    </location>
</feature>
<feature type="domain" description="SET" evidence="4">
    <location>
        <begin position="613"/>
        <end position="728"/>
    </location>
</feature>
<feature type="region of interest" description="Disordered" evidence="6">
    <location>
        <begin position="188"/>
        <end position="231"/>
    </location>
</feature>
<feature type="region of interest" description="Disordered" evidence="6">
    <location>
        <begin position="368"/>
        <end position="414"/>
    </location>
</feature>
<feature type="short sequence motif" description="Nuclear localization signal" evidence="3">
    <location>
        <begin position="491"/>
        <end position="496"/>
    </location>
</feature>
<feature type="compositionally biased region" description="Basic and acidic residues" evidence="6">
    <location>
        <begin position="194"/>
        <end position="211"/>
    </location>
</feature>
<feature type="compositionally biased region" description="Low complexity" evidence="6">
    <location>
        <begin position="369"/>
        <end position="381"/>
    </location>
</feature>
<feature type="compositionally biased region" description="Basic and acidic residues" evidence="6">
    <location>
        <begin position="382"/>
        <end position="393"/>
    </location>
</feature>
<feature type="compositionally biased region" description="Polar residues" evidence="6">
    <location>
        <begin position="395"/>
        <end position="414"/>
    </location>
</feature>
<feature type="cross-link" description="Glycyl lysine isopeptide (Lys-Gly) (interchain with G-Cter in SUMO2)" evidence="2">
    <location>
        <position position="327"/>
    </location>
</feature>
<feature type="splice variant" id="VSP_036388" description="In isoform 2." evidence="11">
    <original>QNRFPGCRCKTQCNTKQCPCYLAVRECDPDLCLTCGASEHWDCKVVSCKNCSIQRGLKKHLLLAPSDVAGWGTFIKESVQKNEFISEYCGELISQDEADRRGKVYDKYMSSFLFNLNNDFVVDATRKGNKIRFANHSVNPNCYAKVVMVNGDHRIGIFAKRAIQAGEELFFDYRYSQADALKYVGIERETDVF</original>
    <variation>KSTLLSPSSTQVVGLGVPRLFSPAP</variation>
    <location>
        <begin position="555"/>
        <end position="747"/>
    </location>
</feature>
<feature type="sequence conflict" description="In Ref. 5; BAE32680." evidence="12" ref="5">
    <original>T</original>
    <variation>A</variation>
    <location>
        <position position="84"/>
    </location>
</feature>
<feature type="sequence conflict" description="In Ref. 2; AAD54021." evidence="12" ref="2">
    <original>H</original>
    <variation>Y</variation>
    <location>
        <position position="446"/>
    </location>
</feature>
<feature type="sequence conflict" description="In Ref. 2; AAD54021." evidence="12" ref="2">
    <original>N</original>
    <variation>Y</variation>
    <location>
        <position position="452"/>
    </location>
</feature>
<accession>P70351</accession>
<accession>A2A4K5</accession>
<accession>Q3TPR1</accession>
<accession>Q3U3V5</accession>
<accession>Q3UU02</accession>
<accession>Q8BR85</accession>
<accession>Q922L1</accession>
<accession>Q9R089</accession>
<sequence length="747" mass="85188">MDIASPPTSKCITYWKRKVKSEYMRLRQLKRLQANMGAKALYVANFAKVQEKTQILNEEWKKLRVQPVQPMKPVSGHPFLKKCTIESIFPGFDSQDMLMRSLNTVALVPIMYSWSPLQQNFMVEDETVLCNIPYMGDEVKEEDETFIEELINNYDGKVHGEEEMIPGSVLISDAVFLELVDALNQYSDEEEDGHNDPSDGKQDDSKEDLPVTRKRKRHAIEGNKKSSKKQFPNDMIFSAIASMFPENGVPDDMKERYRELTEMSDPNALPPQCTPNIDGPNAKSVQREQSLHSFHTLFCRRCFKYDCFLHPFHATPNVYKRKNKEIKIEPEPCGTDCFLLLEGAKEYAMLHNPRSKCSGRRRRRHPVVSASCSNASASAMAETKEGDSDRDTGNDWASSSSEANSRCQTPTKQKASPAPAQLCVVEAPSEPVEWTGAEESLFRVFHGTYFNNFCSIARLLGTKTCKQVFQFAVKESLILKLPTDELMNPAQKKKRKHRLWAAHCRKIQLKKDNNSTQVYNYQPCDHPDRPCDSTCPCIMTQNFCEKFCQCSPDCQNRFPGCRCKTQCNTKQCPCYLAVRECDPDLCLTCGASEHWDCKVVSCKNCSIQRGLKKHLLLAPSDVAGWGTFIKESVQKNEFISEYCGELISQDEADRRGKVYDKYMSSFLFNLNNDFVVDATRKGNKIRFANHSVNPNCYAKVVMVNGDHRIGIFAKRAIQAGEELFFDYRYSQADALKYVGIERETDVF</sequence>
<keyword id="KW-0025">Alternative splicing</keyword>
<keyword id="KW-0156">Chromatin regulator</keyword>
<keyword id="KW-1017">Isopeptide bond</keyword>
<keyword id="KW-0489">Methyltransferase</keyword>
<keyword id="KW-0539">Nucleus</keyword>
<keyword id="KW-1185">Reference proteome</keyword>
<keyword id="KW-0678">Repressor</keyword>
<keyword id="KW-0949">S-adenosyl-L-methionine</keyword>
<keyword id="KW-0804">Transcription</keyword>
<keyword id="KW-0805">Transcription regulation</keyword>
<keyword id="KW-0808">Transferase</keyword>
<keyword id="KW-0832">Ubl conjugation</keyword>
<evidence type="ECO:0000250" key="1"/>
<evidence type="ECO:0000250" key="2">
    <source>
        <dbReference type="UniProtKB" id="Q92800"/>
    </source>
</evidence>
<evidence type="ECO:0000255" key="3"/>
<evidence type="ECO:0000255" key="4">
    <source>
        <dbReference type="PROSITE-ProRule" id="PRU00190"/>
    </source>
</evidence>
<evidence type="ECO:0000255" key="5">
    <source>
        <dbReference type="PROSITE-ProRule" id="PRU00970"/>
    </source>
</evidence>
<evidence type="ECO:0000256" key="6">
    <source>
        <dbReference type="SAM" id="MobiDB-lite"/>
    </source>
</evidence>
<evidence type="ECO:0000269" key="7">
    <source>
    </source>
</evidence>
<evidence type="ECO:0000269" key="8">
    <source>
    </source>
</evidence>
<evidence type="ECO:0000269" key="9">
    <source>
    </source>
</evidence>
<evidence type="ECO:0000269" key="10">
    <source>
    </source>
</evidence>
<evidence type="ECO:0000303" key="11">
    <source>
    </source>
</evidence>
<evidence type="ECO:0000305" key="12"/>
<reference key="1">
    <citation type="journal article" date="1997" name="EMBO J.">
        <title>Mammalian homologues of the Polycomb-group gene Enhancer of zeste mediate gene silencing in Drosophila heterochromatin and at S. cerevisiae telomeres.</title>
        <authorList>
            <person name="Laible G."/>
            <person name="Wolf A."/>
            <person name="Dorn R."/>
            <person name="Reuter G."/>
            <person name="Nislow C."/>
            <person name="Lebersorger A."/>
            <person name="Popkin D."/>
            <person name="Pillus L."/>
            <person name="Jenuwein T."/>
        </authorList>
    </citation>
    <scope>NUCLEOTIDE SEQUENCE [MRNA] (ISOFORM 1)</scope>
</reference>
<reference key="2">
    <citation type="journal article" date="1998" name="Biochim. Biophys. Acta">
        <title>Cloning and expression of a human/mouse Polycomb group gene, ENX-2/Enx-2.</title>
        <authorList>
            <person name="Ogawa M."/>
            <person name="Hiraoka Y."/>
            <person name="Taniguchi K."/>
            <person name="Aiso S."/>
        </authorList>
    </citation>
    <scope>NUCLEOTIDE SEQUENCE [MRNA] (ISOFORM 1)</scope>
    <scope>TISSUE SPECIFICITY</scope>
</reference>
<reference key="3">
    <citation type="journal article" date="1999" name="Mamm. Genome">
        <title>The murine polycomb-group genes ezh1 and ezh2 map close to hox gene clusters on mouse chromosomes 11 and 6.</title>
        <authorList>
            <person name="Laible G."/>
            <person name="Haynes A.R."/>
            <person name="Lebersorger A."/>
            <person name="O'Carroll D."/>
            <person name="Mattei M.-G."/>
            <person name="Denny P."/>
            <person name="Brown S.D.M."/>
            <person name="Jenuwein T."/>
        </authorList>
    </citation>
    <scope>NUCLEOTIDE SEQUENCE [GENOMIC DNA]</scope>
    <source>
        <strain>129/Sv</strain>
    </source>
</reference>
<reference key="4">
    <citation type="journal article" date="2001" name="Mamm. Genome">
        <title>High-throughput sequence identification of gene coding variants within alcohol-related QTLs.</title>
        <authorList>
            <person name="Ehringer M.A."/>
            <person name="Thompson J."/>
            <person name="Conroy O."/>
            <person name="Xu Y."/>
            <person name="Yang F."/>
            <person name="Canniff J."/>
            <person name="Beeson M."/>
            <person name="Gordon L."/>
            <person name="Bennett B."/>
            <person name="Johnson T.E."/>
            <person name="Sikela J.M."/>
        </authorList>
    </citation>
    <scope>NUCLEOTIDE SEQUENCE [MRNA] (ISOFORM 1)</scope>
    <source>
        <strain>ILS</strain>
        <strain>ISS</strain>
    </source>
</reference>
<reference key="5">
    <citation type="journal article" date="2005" name="Science">
        <title>The transcriptional landscape of the mammalian genome.</title>
        <authorList>
            <person name="Carninci P."/>
            <person name="Kasukawa T."/>
            <person name="Katayama S."/>
            <person name="Gough J."/>
            <person name="Frith M.C."/>
            <person name="Maeda N."/>
            <person name="Oyama R."/>
            <person name="Ravasi T."/>
            <person name="Lenhard B."/>
            <person name="Wells C."/>
            <person name="Kodzius R."/>
            <person name="Shimokawa K."/>
            <person name="Bajic V.B."/>
            <person name="Brenner S.E."/>
            <person name="Batalov S."/>
            <person name="Forrest A.R."/>
            <person name="Zavolan M."/>
            <person name="Davis M.J."/>
            <person name="Wilming L.G."/>
            <person name="Aidinis V."/>
            <person name="Allen J.E."/>
            <person name="Ambesi-Impiombato A."/>
            <person name="Apweiler R."/>
            <person name="Aturaliya R.N."/>
            <person name="Bailey T.L."/>
            <person name="Bansal M."/>
            <person name="Baxter L."/>
            <person name="Beisel K.W."/>
            <person name="Bersano T."/>
            <person name="Bono H."/>
            <person name="Chalk A.M."/>
            <person name="Chiu K.P."/>
            <person name="Choudhary V."/>
            <person name="Christoffels A."/>
            <person name="Clutterbuck D.R."/>
            <person name="Crowe M.L."/>
            <person name="Dalla E."/>
            <person name="Dalrymple B.P."/>
            <person name="de Bono B."/>
            <person name="Della Gatta G."/>
            <person name="di Bernardo D."/>
            <person name="Down T."/>
            <person name="Engstrom P."/>
            <person name="Fagiolini M."/>
            <person name="Faulkner G."/>
            <person name="Fletcher C.F."/>
            <person name="Fukushima T."/>
            <person name="Furuno M."/>
            <person name="Futaki S."/>
            <person name="Gariboldi M."/>
            <person name="Georgii-Hemming P."/>
            <person name="Gingeras T.R."/>
            <person name="Gojobori T."/>
            <person name="Green R.E."/>
            <person name="Gustincich S."/>
            <person name="Harbers M."/>
            <person name="Hayashi Y."/>
            <person name="Hensch T.K."/>
            <person name="Hirokawa N."/>
            <person name="Hill D."/>
            <person name="Huminiecki L."/>
            <person name="Iacono M."/>
            <person name="Ikeo K."/>
            <person name="Iwama A."/>
            <person name="Ishikawa T."/>
            <person name="Jakt M."/>
            <person name="Kanapin A."/>
            <person name="Katoh M."/>
            <person name="Kawasawa Y."/>
            <person name="Kelso J."/>
            <person name="Kitamura H."/>
            <person name="Kitano H."/>
            <person name="Kollias G."/>
            <person name="Krishnan S.P."/>
            <person name="Kruger A."/>
            <person name="Kummerfeld S.K."/>
            <person name="Kurochkin I.V."/>
            <person name="Lareau L.F."/>
            <person name="Lazarevic D."/>
            <person name="Lipovich L."/>
            <person name="Liu J."/>
            <person name="Liuni S."/>
            <person name="McWilliam S."/>
            <person name="Madan Babu M."/>
            <person name="Madera M."/>
            <person name="Marchionni L."/>
            <person name="Matsuda H."/>
            <person name="Matsuzawa S."/>
            <person name="Miki H."/>
            <person name="Mignone F."/>
            <person name="Miyake S."/>
            <person name="Morris K."/>
            <person name="Mottagui-Tabar S."/>
            <person name="Mulder N."/>
            <person name="Nakano N."/>
            <person name="Nakauchi H."/>
            <person name="Ng P."/>
            <person name="Nilsson R."/>
            <person name="Nishiguchi S."/>
            <person name="Nishikawa S."/>
            <person name="Nori F."/>
            <person name="Ohara O."/>
            <person name="Okazaki Y."/>
            <person name="Orlando V."/>
            <person name="Pang K.C."/>
            <person name="Pavan W.J."/>
            <person name="Pavesi G."/>
            <person name="Pesole G."/>
            <person name="Petrovsky N."/>
            <person name="Piazza S."/>
            <person name="Reed J."/>
            <person name="Reid J.F."/>
            <person name="Ring B.Z."/>
            <person name="Ringwald M."/>
            <person name="Rost B."/>
            <person name="Ruan Y."/>
            <person name="Salzberg S.L."/>
            <person name="Sandelin A."/>
            <person name="Schneider C."/>
            <person name="Schoenbach C."/>
            <person name="Sekiguchi K."/>
            <person name="Semple C.A."/>
            <person name="Seno S."/>
            <person name="Sessa L."/>
            <person name="Sheng Y."/>
            <person name="Shibata Y."/>
            <person name="Shimada H."/>
            <person name="Shimada K."/>
            <person name="Silva D."/>
            <person name="Sinclair B."/>
            <person name="Sperling S."/>
            <person name="Stupka E."/>
            <person name="Sugiura K."/>
            <person name="Sultana R."/>
            <person name="Takenaka Y."/>
            <person name="Taki K."/>
            <person name="Tammoja K."/>
            <person name="Tan S.L."/>
            <person name="Tang S."/>
            <person name="Taylor M.S."/>
            <person name="Tegner J."/>
            <person name="Teichmann S.A."/>
            <person name="Ueda H.R."/>
            <person name="van Nimwegen E."/>
            <person name="Verardo R."/>
            <person name="Wei C.L."/>
            <person name="Yagi K."/>
            <person name="Yamanishi H."/>
            <person name="Zabarovsky E."/>
            <person name="Zhu S."/>
            <person name="Zimmer A."/>
            <person name="Hide W."/>
            <person name="Bult C."/>
            <person name="Grimmond S.M."/>
            <person name="Teasdale R.D."/>
            <person name="Liu E.T."/>
            <person name="Brusic V."/>
            <person name="Quackenbush J."/>
            <person name="Wahlestedt C."/>
            <person name="Mattick J.S."/>
            <person name="Hume D.A."/>
            <person name="Kai C."/>
            <person name="Sasaki D."/>
            <person name="Tomaru Y."/>
            <person name="Fukuda S."/>
            <person name="Kanamori-Katayama M."/>
            <person name="Suzuki M."/>
            <person name="Aoki J."/>
            <person name="Arakawa T."/>
            <person name="Iida J."/>
            <person name="Imamura K."/>
            <person name="Itoh M."/>
            <person name="Kato T."/>
            <person name="Kawaji H."/>
            <person name="Kawagashira N."/>
            <person name="Kawashima T."/>
            <person name="Kojima M."/>
            <person name="Kondo S."/>
            <person name="Konno H."/>
            <person name="Nakano K."/>
            <person name="Ninomiya N."/>
            <person name="Nishio T."/>
            <person name="Okada M."/>
            <person name="Plessy C."/>
            <person name="Shibata K."/>
            <person name="Shiraki T."/>
            <person name="Suzuki S."/>
            <person name="Tagami M."/>
            <person name="Waki K."/>
            <person name="Watahiki A."/>
            <person name="Okamura-Oho Y."/>
            <person name="Suzuki H."/>
            <person name="Kawai J."/>
            <person name="Hayashizaki Y."/>
        </authorList>
    </citation>
    <scope>NUCLEOTIDE SEQUENCE [LARGE SCALE MRNA] (ISOFORMS 1 AND 2)</scope>
    <source>
        <strain>C57BL/6J</strain>
        <strain>NOD</strain>
        <tissue>Aorta</tissue>
        <tissue>Cerebellum</tissue>
        <tissue>Corpora quadrigemina</tissue>
        <tissue>Hippocampus</tissue>
        <tissue>Vein</tissue>
    </source>
</reference>
<reference key="6">
    <citation type="journal article" date="2009" name="PLoS Biol.">
        <title>Lineage-specific biology revealed by a finished genome assembly of the mouse.</title>
        <authorList>
            <person name="Church D.M."/>
            <person name="Goodstadt L."/>
            <person name="Hillier L.W."/>
            <person name="Zody M.C."/>
            <person name="Goldstein S."/>
            <person name="She X."/>
            <person name="Bult C.J."/>
            <person name="Agarwala R."/>
            <person name="Cherry J.L."/>
            <person name="DiCuccio M."/>
            <person name="Hlavina W."/>
            <person name="Kapustin Y."/>
            <person name="Meric P."/>
            <person name="Maglott D."/>
            <person name="Birtle Z."/>
            <person name="Marques A.C."/>
            <person name="Graves T."/>
            <person name="Zhou S."/>
            <person name="Teague B."/>
            <person name="Potamousis K."/>
            <person name="Churas C."/>
            <person name="Place M."/>
            <person name="Herschleb J."/>
            <person name="Runnheim R."/>
            <person name="Forrest D."/>
            <person name="Amos-Landgraf J."/>
            <person name="Schwartz D.C."/>
            <person name="Cheng Z."/>
            <person name="Lindblad-Toh K."/>
            <person name="Eichler E.E."/>
            <person name="Ponting C.P."/>
        </authorList>
    </citation>
    <scope>NUCLEOTIDE SEQUENCE [LARGE SCALE GENOMIC DNA]</scope>
    <source>
        <strain>C57BL/6J</strain>
    </source>
</reference>
<reference key="7">
    <citation type="submission" date="2005-07" db="EMBL/GenBank/DDBJ databases">
        <authorList>
            <person name="Mural R.J."/>
            <person name="Adams M.D."/>
            <person name="Myers E.W."/>
            <person name="Smith H.O."/>
            <person name="Venter J.C."/>
        </authorList>
    </citation>
    <scope>NUCLEOTIDE SEQUENCE [LARGE SCALE GENOMIC DNA]</scope>
</reference>
<reference key="8">
    <citation type="journal article" date="2004" name="Genome Res.">
        <title>The status, quality, and expansion of the NIH full-length cDNA project: the Mammalian Gene Collection (MGC).</title>
        <authorList>
            <consortium name="The MGC Project Team"/>
        </authorList>
    </citation>
    <scope>NUCLEOTIDE SEQUENCE [LARGE SCALE MRNA] (ISOFORM 1)</scope>
    <source>
        <strain>FVB/N</strain>
        <tissue>Mammary tumor</tissue>
    </source>
</reference>
<reference key="9">
    <citation type="journal article" date="2008" name="Mol. Cell">
        <title>EZH1 mediates methylation on histone H3 lysine 27 and complements EZH2 in maintaining stem cell identity and executing pluripotency.</title>
        <authorList>
            <person name="Shen X."/>
            <person name="Liu Y."/>
            <person name="Hsu Y.-J."/>
            <person name="Fujiwara Y."/>
            <person name="Kim J."/>
            <person name="Mao X."/>
            <person name="Yuan G.-C."/>
            <person name="Orkin S.H."/>
        </authorList>
    </citation>
    <scope>FUNCTION</scope>
    <scope>CATALYTIC ACTIVITY</scope>
    <scope>SUBCELLULAR LOCATION</scope>
    <scope>IDENTIFICATION BY MASS SPECTROMETRY</scope>
    <scope>IDENTIFICATION IN THE PRC2/EED-EZH1 COMPLEX</scope>
</reference>
<reference key="10">
    <citation type="journal article" date="2010" name="Cell Stem Cell">
        <title>Polycomb-like 2 associates with PRC2 and regulates transcriptional networks during mouse embryonic stem cell self-renewal and differentiation.</title>
        <authorList>
            <person name="Walker E."/>
            <person name="Chang W.Y."/>
            <person name="Hunkapiller J."/>
            <person name="Cagney G."/>
            <person name="Garcha K."/>
            <person name="Torchia J."/>
            <person name="Krogan N.J."/>
            <person name="Reiter J.F."/>
            <person name="Stanford W.L."/>
        </authorList>
    </citation>
    <scope>IDENTIFICATION IN THE PRC2 COMPLEX</scope>
</reference>
<reference key="11">
    <citation type="journal article" date="2019" name="Nat. Commun.">
        <title>EZHIP constrains Polycomb Repressive Complex 2 activity in germ cells.</title>
        <authorList>
            <person name="Ragazzini R."/>
            <person name="Perez-Palacios R."/>
            <person name="Baymaz I.H."/>
            <person name="Diop S."/>
            <person name="Ancelin K."/>
            <person name="Zielinski D."/>
            <person name="Michaud A."/>
            <person name="Givelet M."/>
            <person name="Borsos M."/>
            <person name="Aflaki S."/>
            <person name="Legoix P."/>
            <person name="Jansen P.W.T.C."/>
            <person name="Servant N."/>
            <person name="Torres-Padilla M.E."/>
            <person name="Bourc'his D."/>
            <person name="Fouchet P."/>
            <person name="Vermeulen M."/>
            <person name="Margueron R."/>
        </authorList>
    </citation>
    <scope>INTERACTION WITH EZHIP</scope>
</reference>
<name>EZH1_MOUSE</name>
<protein>
    <recommendedName>
        <fullName>Histone-lysine N-methyltransferase EZH1</fullName>
        <ecNumber evidence="7">2.1.1.356</ecNumber>
    </recommendedName>
    <alternativeName>
        <fullName>ENX-2</fullName>
    </alternativeName>
    <alternativeName>
        <fullName>Enhancer of zeste homolog 1</fullName>
    </alternativeName>
</protein>
<gene>
    <name type="primary">Ezh1</name>
    <name type="synonym">Enx2</name>
</gene>
<proteinExistence type="evidence at protein level"/>
<comment type="function">
    <text evidence="7">Polycomb group (PcG) protein. Catalytic subunit of the PRC2/EED-EZH1 complex, which methylates 'Lys-27' of histone H3, leading to transcriptional repression of the affected target gene. Able to mono-, di- and trimethylate 'Lys-27' of histone H3 to form H3K27me1, H3K27me2 and H3K27me3, respectively. Required for embryonic stem cell derivation and self-renewal, suggesting that it is involved in safeguarding embryonic stem cell identity. Compared to EZH2-containing complexes, it is less abundant in embryonic stem cells, has weak methyltransferase activity and plays a less critical role in forming H3K27me3, which is required for embryonic stem cell identity and proper differentiation.</text>
</comment>
<comment type="catalytic activity">
    <reaction evidence="7">
        <text>L-lysyl(27)-[histone H3] + 3 S-adenosyl-L-methionine = N(6),N(6),N(6)-trimethyl-L-lysyl(27)-[histone H3] + 3 S-adenosyl-L-homocysteine + 3 H(+)</text>
        <dbReference type="Rhea" id="RHEA:60292"/>
        <dbReference type="Rhea" id="RHEA-COMP:15535"/>
        <dbReference type="Rhea" id="RHEA-COMP:15548"/>
        <dbReference type="ChEBI" id="CHEBI:15378"/>
        <dbReference type="ChEBI" id="CHEBI:29969"/>
        <dbReference type="ChEBI" id="CHEBI:57856"/>
        <dbReference type="ChEBI" id="CHEBI:59789"/>
        <dbReference type="ChEBI" id="CHEBI:61961"/>
        <dbReference type="EC" id="2.1.1.356"/>
    </reaction>
</comment>
<comment type="subunit">
    <text evidence="7 8 9">Component of the PRC2/EED-EZH1 complex, which includes EED, EZH1, SUZ12, RBBP4 and AEBP2. The PRC2/EED-EZH1 is less abundant than the PRC2/EED-EZH2 complex, has weak methyltransferase activity and compacts chromatin in the absence of the methyltransferase cofactor S-adenosyl-L-methionine (SAM). Interacts with EZHIP; the interaction blocks EZH1 methyltransferase activity (PubMed:31451685).</text>
</comment>
<comment type="interaction">
    <interactant intactId="EBI-2531737">
        <id>P70351</id>
    </interactant>
    <interactant intactId="EBI-493592">
        <id>Q62315</id>
        <label>Jarid2</label>
    </interactant>
    <organismsDiffer>false</organismsDiffer>
    <experiments>4</experiments>
</comment>
<comment type="interaction">
    <interactant intactId="EBI-2531737">
        <id>P70351</id>
    </interactant>
    <interactant intactId="EBI-2531578">
        <id>Q02395</id>
        <label>Mtf2</label>
    </interactant>
    <organismsDiffer>false</organismsDiffer>
    <experiments>3</experiments>
</comment>
<comment type="subcellular location">
    <subcellularLocation>
        <location evidence="1">Nucleus</location>
    </subcellularLocation>
    <text evidence="1">Colocalizes with trimethylated 'Lys-27' of histone H3.</text>
</comment>
<comment type="alternative products">
    <event type="alternative splicing"/>
    <isoform>
        <id>P70351-1</id>
        <name>1</name>
        <sequence type="displayed"/>
    </isoform>
    <isoform>
        <id>P70351-2</id>
        <name>2</name>
        <sequence type="described" ref="VSP_036388"/>
    </isoform>
</comment>
<comment type="tissue specificity">
    <text evidence="10">Expressed at high levels in kidney, adrenal gland, testis and brain.</text>
</comment>
<comment type="similarity">
    <text evidence="4">Belongs to the class V-like SAM-binding methyltransferase superfamily. Histone-lysine methyltransferase family. EZ subfamily.</text>
</comment>
<comment type="sequence caution" evidence="12">
    <conflict type="erroneous initiation">
        <sequence resource="EMBL-CDS" id="AAH07135"/>
    </conflict>
</comment>
<comment type="sequence caution" evidence="12">
    <conflict type="erroneous initiation">
        <sequence resource="EMBL-CDS" id="AAL90764"/>
    </conflict>
</comment>
<comment type="sequence caution" evidence="12">
    <conflict type="erroneous initiation">
        <sequence resource="EMBL-CDS" id="AAL90765"/>
    </conflict>
</comment>
<comment type="sequence caution" evidence="12">
    <conflict type="erroneous initiation">
        <sequence resource="EMBL-CDS" id="BAA25018"/>
    </conflict>
</comment>
<comment type="sequence caution" evidence="12">
    <conflict type="erroneous initiation">
        <sequence resource="EMBL-CDS" id="BAE23827"/>
    </conflict>
</comment>
<comment type="sequence caution" evidence="12">
    <conflict type="erroneous initiation">
        <sequence resource="EMBL-CDS" id="BAE24446"/>
    </conflict>
</comment>
<comment type="sequence caution" evidence="12">
    <conflict type="erroneous initiation">
        <sequence resource="EMBL-CDS" id="BAE32680"/>
    </conflict>
</comment>
<comment type="sequence caution" evidence="12">
    <conflict type="erroneous initiation">
        <sequence resource="EMBL-CDS" id="BAE37674"/>
    </conflict>
</comment>
<comment type="sequence caution" evidence="12">
    <conflict type="erroneous initiation">
        <sequence resource="EMBL-CDS" id="EDL03899"/>
    </conflict>
</comment>
<organism>
    <name type="scientific">Mus musculus</name>
    <name type="common">Mouse</name>
    <dbReference type="NCBI Taxonomy" id="10090"/>
    <lineage>
        <taxon>Eukaryota</taxon>
        <taxon>Metazoa</taxon>
        <taxon>Chordata</taxon>
        <taxon>Craniata</taxon>
        <taxon>Vertebrata</taxon>
        <taxon>Euteleostomi</taxon>
        <taxon>Mammalia</taxon>
        <taxon>Eutheria</taxon>
        <taxon>Euarchontoglires</taxon>
        <taxon>Glires</taxon>
        <taxon>Rodentia</taxon>
        <taxon>Myomorpha</taxon>
        <taxon>Muroidea</taxon>
        <taxon>Muridae</taxon>
        <taxon>Murinae</taxon>
        <taxon>Mus</taxon>
        <taxon>Mus</taxon>
    </lineage>
</organism>
<dbReference type="EC" id="2.1.1.356" evidence="7"/>
<dbReference type="EMBL" id="U60453">
    <property type="protein sequence ID" value="AAC53279.1"/>
    <property type="molecule type" value="mRNA"/>
</dbReference>
<dbReference type="EMBL" id="AB004817">
    <property type="protein sequence ID" value="BAA25018.1"/>
    <property type="status" value="ALT_INIT"/>
    <property type="molecule type" value="mRNA"/>
</dbReference>
<dbReference type="EMBL" id="AF104360">
    <property type="protein sequence ID" value="AAD54021.1"/>
    <property type="molecule type" value="Genomic_DNA"/>
</dbReference>
<dbReference type="EMBL" id="AF483490">
    <property type="protein sequence ID" value="AAL90764.1"/>
    <property type="status" value="ALT_INIT"/>
    <property type="molecule type" value="mRNA"/>
</dbReference>
<dbReference type="EMBL" id="AF483491">
    <property type="protein sequence ID" value="AAL90765.1"/>
    <property type="status" value="ALT_INIT"/>
    <property type="molecule type" value="mRNA"/>
</dbReference>
<dbReference type="EMBL" id="AK045374">
    <property type="protein sequence ID" value="BAC32334.1"/>
    <property type="molecule type" value="mRNA"/>
</dbReference>
<dbReference type="EMBL" id="AK138942">
    <property type="protein sequence ID" value="BAE23827.1"/>
    <property type="status" value="ALT_INIT"/>
    <property type="molecule type" value="mRNA"/>
</dbReference>
<dbReference type="EMBL" id="AK140694">
    <property type="protein sequence ID" value="BAE24446.1"/>
    <property type="status" value="ALT_INIT"/>
    <property type="molecule type" value="mRNA"/>
</dbReference>
<dbReference type="EMBL" id="AK154565">
    <property type="protein sequence ID" value="BAE32680.1"/>
    <property type="status" value="ALT_INIT"/>
    <property type="molecule type" value="mRNA"/>
</dbReference>
<dbReference type="EMBL" id="AK164192">
    <property type="protein sequence ID" value="BAE37674.1"/>
    <property type="status" value="ALT_INIT"/>
    <property type="molecule type" value="mRNA"/>
</dbReference>
<dbReference type="EMBL" id="AL590969">
    <property type="status" value="NOT_ANNOTATED_CDS"/>
    <property type="molecule type" value="Genomic_DNA"/>
</dbReference>
<dbReference type="EMBL" id="CH466677">
    <property type="protein sequence ID" value="EDL03899.1"/>
    <property type="status" value="ALT_INIT"/>
    <property type="molecule type" value="Genomic_DNA"/>
</dbReference>
<dbReference type="EMBL" id="BC007135">
    <property type="protein sequence ID" value="AAH07135.1"/>
    <property type="status" value="ALT_INIT"/>
    <property type="molecule type" value="mRNA"/>
</dbReference>
<dbReference type="RefSeq" id="NP_001390738.1">
    <molecule id="P70351-1"/>
    <property type="nucleotide sequence ID" value="NM_001403809.1"/>
</dbReference>
<dbReference type="RefSeq" id="NP_001390744.1">
    <molecule id="P70351-2"/>
    <property type="nucleotide sequence ID" value="NM_001403815.1"/>
</dbReference>
<dbReference type="RefSeq" id="NP_031996.1">
    <property type="nucleotide sequence ID" value="NM_007970.3"/>
</dbReference>
<dbReference type="RefSeq" id="XP_006532241.1">
    <property type="nucleotide sequence ID" value="XM_006532178.3"/>
</dbReference>
<dbReference type="SMR" id="P70351"/>
<dbReference type="BioGRID" id="199563">
    <property type="interactions" value="19"/>
</dbReference>
<dbReference type="DIP" id="DIP-56992N"/>
<dbReference type="FunCoup" id="P70351">
    <property type="interactions" value="3044"/>
</dbReference>
<dbReference type="IntAct" id="P70351">
    <property type="interactions" value="8"/>
</dbReference>
<dbReference type="STRING" id="10090.ENSMUSP00000102906"/>
<dbReference type="GlyGen" id="P70351">
    <property type="glycosylation" value="1 site, 1 N-linked glycan (1 site)"/>
</dbReference>
<dbReference type="iPTMnet" id="P70351"/>
<dbReference type="PhosphoSitePlus" id="P70351"/>
<dbReference type="jPOST" id="P70351"/>
<dbReference type="PaxDb" id="10090-ENSMUSP00000102906"/>
<dbReference type="PeptideAtlas" id="P70351"/>
<dbReference type="ProteomicsDB" id="275809">
    <molecule id="P70351-1"/>
</dbReference>
<dbReference type="ProteomicsDB" id="275810">
    <molecule id="P70351-2"/>
</dbReference>
<dbReference type="Antibodypedia" id="1432">
    <property type="antibodies" value="397 antibodies from 37 providers"/>
</dbReference>
<dbReference type="DNASU" id="14055"/>
<dbReference type="Ensembl" id="ENSMUST00000100417.3">
    <molecule id="P70351-2"/>
    <property type="protein sequence ID" value="ENSMUSP00000097984.3"/>
    <property type="gene ID" value="ENSMUSG00000006920.15"/>
</dbReference>
<dbReference type="Ensembl" id="ENSMUST00000107284.8">
    <molecule id="P70351-1"/>
    <property type="protein sequence ID" value="ENSMUSP00000102905.2"/>
    <property type="gene ID" value="ENSMUSG00000006920.15"/>
</dbReference>
<dbReference type="GeneID" id="14055"/>
<dbReference type="KEGG" id="mmu:14055"/>
<dbReference type="UCSC" id="uc007lnw.3">
    <molecule id="P70351-2"/>
    <property type="organism name" value="mouse"/>
</dbReference>
<dbReference type="UCSC" id="uc011yfk.2">
    <molecule id="P70351-1"/>
    <property type="organism name" value="mouse"/>
</dbReference>
<dbReference type="AGR" id="MGI:1097695"/>
<dbReference type="CTD" id="2145"/>
<dbReference type="MGI" id="MGI:1097695">
    <property type="gene designation" value="Ezh1"/>
</dbReference>
<dbReference type="VEuPathDB" id="HostDB:ENSMUSG00000006920"/>
<dbReference type="eggNOG" id="KOG1079">
    <property type="taxonomic scope" value="Eukaryota"/>
</dbReference>
<dbReference type="GeneTree" id="ENSGT00940000156604"/>
<dbReference type="HOGENOM" id="CLU_011342_0_0_1"/>
<dbReference type="InParanoid" id="P70351"/>
<dbReference type="OrthoDB" id="6141102at2759"/>
<dbReference type="PhylomeDB" id="P70351"/>
<dbReference type="TreeFam" id="TF314509"/>
<dbReference type="BioGRID-ORCS" id="14055">
    <property type="hits" value="2 hits in 82 CRISPR screens"/>
</dbReference>
<dbReference type="ChiTaRS" id="Ezh1">
    <property type="organism name" value="mouse"/>
</dbReference>
<dbReference type="PRO" id="PR:P70351"/>
<dbReference type="Proteomes" id="UP000000589">
    <property type="component" value="Chromosome 11"/>
</dbReference>
<dbReference type="RNAct" id="P70351">
    <property type="molecule type" value="protein"/>
</dbReference>
<dbReference type="Bgee" id="ENSMUSG00000006920">
    <property type="expression patterns" value="Expressed in ciliary body and 253 other cell types or tissues"/>
</dbReference>
<dbReference type="ExpressionAtlas" id="P70351">
    <property type="expression patterns" value="baseline and differential"/>
</dbReference>
<dbReference type="GO" id="GO:0000781">
    <property type="term" value="C:chromosome, telomeric region"/>
    <property type="evidence" value="ECO:0000316"/>
    <property type="project" value="ARUK-UCL"/>
</dbReference>
<dbReference type="GO" id="GO:0035098">
    <property type="term" value="C:ESC/E(Z) complex"/>
    <property type="evidence" value="ECO:0000314"/>
    <property type="project" value="UniProtKB"/>
</dbReference>
<dbReference type="GO" id="GO:0000792">
    <property type="term" value="C:heterochromatin"/>
    <property type="evidence" value="ECO:0000314"/>
    <property type="project" value="ARUK-UCL"/>
</dbReference>
<dbReference type="GO" id="GO:0005634">
    <property type="term" value="C:nucleus"/>
    <property type="evidence" value="ECO:0000314"/>
    <property type="project" value="MGI"/>
</dbReference>
<dbReference type="GO" id="GO:0046976">
    <property type="term" value="F:histone H3K27 methyltransferase activity"/>
    <property type="evidence" value="ECO:0000314"/>
    <property type="project" value="MGI"/>
</dbReference>
<dbReference type="GO" id="GO:0140951">
    <property type="term" value="F:histone H3K27 trimethyltransferase activity"/>
    <property type="evidence" value="ECO:0007669"/>
    <property type="project" value="UniProtKB-EC"/>
</dbReference>
<dbReference type="GO" id="GO:0003714">
    <property type="term" value="F:transcription corepressor activity"/>
    <property type="evidence" value="ECO:0000314"/>
    <property type="project" value="ARUK-UCL"/>
</dbReference>
<dbReference type="GO" id="GO:0006338">
    <property type="term" value="P:chromatin remodeling"/>
    <property type="evidence" value="ECO:0000314"/>
    <property type="project" value="ARUK-UCL"/>
</dbReference>
<dbReference type="GO" id="GO:0140718">
    <property type="term" value="P:facultative heterochromatin formation"/>
    <property type="evidence" value="ECO:0000314"/>
    <property type="project" value="GO_Central"/>
</dbReference>
<dbReference type="GO" id="GO:0036333">
    <property type="term" value="P:hepatocyte homeostasis"/>
    <property type="evidence" value="ECO:0000316"/>
    <property type="project" value="MGI"/>
</dbReference>
<dbReference type="GO" id="GO:0031507">
    <property type="term" value="P:heterochromatin formation"/>
    <property type="evidence" value="ECO:0000314"/>
    <property type="project" value="ARUK-UCL"/>
</dbReference>
<dbReference type="GO" id="GO:0097421">
    <property type="term" value="P:liver regeneration"/>
    <property type="evidence" value="ECO:0000316"/>
    <property type="project" value="MGI"/>
</dbReference>
<dbReference type="GO" id="GO:0032259">
    <property type="term" value="P:methylation"/>
    <property type="evidence" value="ECO:0007669"/>
    <property type="project" value="UniProtKB-KW"/>
</dbReference>
<dbReference type="GO" id="GO:0000122">
    <property type="term" value="P:negative regulation of transcription by RNA polymerase II"/>
    <property type="evidence" value="ECO:0000314"/>
    <property type="project" value="ARUK-UCL"/>
</dbReference>
<dbReference type="GO" id="GO:1904772">
    <property type="term" value="P:response to tetrachloromethane"/>
    <property type="evidence" value="ECO:0000316"/>
    <property type="project" value="MGI"/>
</dbReference>
<dbReference type="GO" id="GO:0031509">
    <property type="term" value="P:subtelomeric heterochromatin formation"/>
    <property type="evidence" value="ECO:0000316"/>
    <property type="project" value="ARUK-UCL"/>
</dbReference>
<dbReference type="CDD" id="cd00167">
    <property type="entry name" value="SANT"/>
    <property type="match status" value="1"/>
</dbReference>
<dbReference type="CDD" id="cd19217">
    <property type="entry name" value="SET_EZH1"/>
    <property type="match status" value="1"/>
</dbReference>
<dbReference type="FunFam" id="2.170.270.10:FF:000001">
    <property type="entry name" value="Putative histone-lysine N-methyltransferase EZH2"/>
    <property type="match status" value="1"/>
</dbReference>
<dbReference type="Gene3D" id="2.170.270.10">
    <property type="entry name" value="SET domain"/>
    <property type="match status" value="1"/>
</dbReference>
<dbReference type="InterPro" id="IPR026489">
    <property type="entry name" value="CXC_dom"/>
</dbReference>
<dbReference type="InterPro" id="IPR045318">
    <property type="entry name" value="EZH1/2-like"/>
</dbReference>
<dbReference type="InterPro" id="IPR048358">
    <property type="entry name" value="EZH1/2_MCSS"/>
</dbReference>
<dbReference type="InterPro" id="IPR021654">
    <property type="entry name" value="EZH1/EZH2"/>
</dbReference>
<dbReference type="InterPro" id="IPR044438">
    <property type="entry name" value="EZH1_SET"/>
</dbReference>
<dbReference type="InterPro" id="IPR041343">
    <property type="entry name" value="PRC2_HTH_1"/>
</dbReference>
<dbReference type="InterPro" id="IPR041355">
    <property type="entry name" value="Pre-SET_CXC"/>
</dbReference>
<dbReference type="InterPro" id="IPR001005">
    <property type="entry name" value="SANT/Myb"/>
</dbReference>
<dbReference type="InterPro" id="IPR001214">
    <property type="entry name" value="SET_dom"/>
</dbReference>
<dbReference type="InterPro" id="IPR046341">
    <property type="entry name" value="SET_dom_sf"/>
</dbReference>
<dbReference type="InterPro" id="IPR033467">
    <property type="entry name" value="Tesmin/TSO1-like_CXC"/>
</dbReference>
<dbReference type="PANTHER" id="PTHR45747">
    <property type="entry name" value="HISTONE-LYSINE N-METHYLTRANSFERASE E(Z)"/>
    <property type="match status" value="1"/>
</dbReference>
<dbReference type="PANTHER" id="PTHR45747:SF1">
    <property type="entry name" value="HISTONE-LYSINE N-METHYLTRANSFERASE EZH1"/>
    <property type="match status" value="1"/>
</dbReference>
<dbReference type="Pfam" id="PF21358">
    <property type="entry name" value="Ezh2_MCSS"/>
    <property type="match status" value="1"/>
</dbReference>
<dbReference type="Pfam" id="PF11616">
    <property type="entry name" value="EZH2_WD-Binding"/>
    <property type="match status" value="1"/>
</dbReference>
<dbReference type="Pfam" id="PF18118">
    <property type="entry name" value="PRC2_HTH_1"/>
    <property type="match status" value="1"/>
</dbReference>
<dbReference type="Pfam" id="PF18264">
    <property type="entry name" value="preSET_CXC"/>
    <property type="match status" value="1"/>
</dbReference>
<dbReference type="Pfam" id="PF00856">
    <property type="entry name" value="SET"/>
    <property type="match status" value="1"/>
</dbReference>
<dbReference type="SMART" id="SM01114">
    <property type="entry name" value="CXC"/>
    <property type="match status" value="1"/>
</dbReference>
<dbReference type="SMART" id="SM00717">
    <property type="entry name" value="SANT"/>
    <property type="match status" value="2"/>
</dbReference>
<dbReference type="SMART" id="SM00317">
    <property type="entry name" value="SET"/>
    <property type="match status" value="1"/>
</dbReference>
<dbReference type="SUPFAM" id="SSF82199">
    <property type="entry name" value="SET domain"/>
    <property type="match status" value="1"/>
</dbReference>
<dbReference type="PROSITE" id="PS51633">
    <property type="entry name" value="CXC"/>
    <property type="match status" value="1"/>
</dbReference>
<dbReference type="PROSITE" id="PS50280">
    <property type="entry name" value="SET"/>
    <property type="match status" value="1"/>
</dbReference>